<feature type="chain" id="PRO_0000314634" description="Autophagy receptor Nbr1">
    <location>
        <begin position="1"/>
        <end position="397"/>
    </location>
</feature>
<feature type="zinc finger region" description="ZZ-type 1" evidence="1">
    <location>
        <begin position="57"/>
        <end position="112"/>
    </location>
</feature>
<feature type="zinc finger region" description="ZZ-type 2" evidence="1">
    <location>
        <begin position="131"/>
        <end position="182"/>
    </location>
</feature>
<feature type="zinc finger region" description="ZZ-type 3" evidence="1">
    <location>
        <begin position="207"/>
        <end position="258"/>
    </location>
</feature>
<feature type="binding site" evidence="4 8 9">
    <location>
        <position position="62"/>
    </location>
    <ligand>
        <name>Zn(2+)</name>
        <dbReference type="ChEBI" id="CHEBI:29105"/>
        <label>1</label>
    </ligand>
</feature>
<feature type="binding site" evidence="4 8 9">
    <location>
        <position position="65"/>
    </location>
    <ligand>
        <name>Zn(2+)</name>
        <dbReference type="ChEBI" id="CHEBI:29105"/>
        <label>1</label>
    </ligand>
</feature>
<feature type="binding site" evidence="4 8 9">
    <location>
        <position position="76"/>
    </location>
    <ligand>
        <name>Zn(2+)</name>
        <dbReference type="ChEBI" id="CHEBI:29105"/>
        <label>2</label>
    </ligand>
</feature>
<feature type="binding site" evidence="4 8 9">
    <location>
        <position position="79"/>
    </location>
    <ligand>
        <name>Zn(2+)</name>
        <dbReference type="ChEBI" id="CHEBI:29105"/>
        <label>2</label>
    </ligand>
</feature>
<feature type="binding site" evidence="4 8 9">
    <location>
        <position position="85"/>
    </location>
    <ligand>
        <name>Zn(2+)</name>
        <dbReference type="ChEBI" id="CHEBI:29105"/>
        <label>1</label>
    </ligand>
</feature>
<feature type="binding site" evidence="4 8 9">
    <location>
        <position position="88"/>
    </location>
    <ligand>
        <name>Zn(2+)</name>
        <dbReference type="ChEBI" id="CHEBI:29105"/>
        <label>1</label>
    </ligand>
</feature>
<feature type="binding site" evidence="4 8 9">
    <location>
        <position position="96"/>
    </location>
    <ligand>
        <name>Zn(2+)</name>
        <dbReference type="ChEBI" id="CHEBI:29105"/>
        <label>2</label>
    </ligand>
</feature>
<feature type="binding site" evidence="4 8 9">
    <location>
        <position position="102"/>
    </location>
    <ligand>
        <name>Zn(2+)</name>
        <dbReference type="ChEBI" id="CHEBI:29105"/>
        <label>2</label>
    </ligand>
</feature>
<feature type="binding site" evidence="1">
    <location>
        <position position="136"/>
    </location>
    <ligand>
        <name>Zn(2+)</name>
        <dbReference type="ChEBI" id="CHEBI:29105"/>
        <label>3</label>
    </ligand>
</feature>
<feature type="binding site" evidence="1">
    <location>
        <position position="139"/>
    </location>
    <ligand>
        <name>Zn(2+)</name>
        <dbReference type="ChEBI" id="CHEBI:29105"/>
        <label>3</label>
    </ligand>
</feature>
<feature type="binding site" evidence="1">
    <location>
        <position position="150"/>
    </location>
    <ligand>
        <name>Zn(2+)</name>
        <dbReference type="ChEBI" id="CHEBI:29105"/>
        <label>4</label>
    </ligand>
</feature>
<feature type="binding site" evidence="1">
    <location>
        <position position="153"/>
    </location>
    <ligand>
        <name>Zn(2+)</name>
        <dbReference type="ChEBI" id="CHEBI:29105"/>
        <label>4</label>
    </ligand>
</feature>
<feature type="binding site" evidence="1">
    <location>
        <position position="159"/>
    </location>
    <ligand>
        <name>Zn(2+)</name>
        <dbReference type="ChEBI" id="CHEBI:29105"/>
        <label>3</label>
    </ligand>
</feature>
<feature type="binding site" evidence="1">
    <location>
        <position position="162"/>
    </location>
    <ligand>
        <name>Zn(2+)</name>
        <dbReference type="ChEBI" id="CHEBI:29105"/>
        <label>3</label>
    </ligand>
</feature>
<feature type="binding site" evidence="1">
    <location>
        <position position="168"/>
    </location>
    <ligand>
        <name>Zn(2+)</name>
        <dbReference type="ChEBI" id="CHEBI:29105"/>
        <label>4</label>
    </ligand>
</feature>
<feature type="binding site" evidence="1">
    <location>
        <position position="172"/>
    </location>
    <ligand>
        <name>Zn(2+)</name>
        <dbReference type="ChEBI" id="CHEBI:29105"/>
        <label>4</label>
    </ligand>
</feature>
<feature type="binding site" evidence="1">
    <location>
        <position position="212"/>
    </location>
    <ligand>
        <name>Zn(2+)</name>
        <dbReference type="ChEBI" id="CHEBI:29105"/>
        <label>5</label>
    </ligand>
</feature>
<feature type="binding site" evidence="1">
    <location>
        <position position="215"/>
    </location>
    <ligand>
        <name>Zn(2+)</name>
        <dbReference type="ChEBI" id="CHEBI:29105"/>
        <label>5</label>
    </ligand>
</feature>
<feature type="binding site" evidence="1">
    <location>
        <position position="227"/>
    </location>
    <ligand>
        <name>Zn(2+)</name>
        <dbReference type="ChEBI" id="CHEBI:29105"/>
        <label>6</label>
    </ligand>
</feature>
<feature type="binding site" evidence="1">
    <location>
        <position position="230"/>
    </location>
    <ligand>
        <name>Zn(2+)</name>
        <dbReference type="ChEBI" id="CHEBI:29105"/>
        <label>6</label>
    </ligand>
</feature>
<feature type="binding site" evidence="1">
    <location>
        <position position="236"/>
    </location>
    <ligand>
        <name>Zn(2+)</name>
        <dbReference type="ChEBI" id="CHEBI:29105"/>
        <label>5</label>
    </ligand>
</feature>
<feature type="binding site" evidence="1">
    <location>
        <position position="239"/>
    </location>
    <ligand>
        <name>Zn(2+)</name>
        <dbReference type="ChEBI" id="CHEBI:29105"/>
        <label>5</label>
    </ligand>
</feature>
<feature type="binding site" evidence="1">
    <location>
        <position position="244"/>
    </location>
    <ligand>
        <name>Zn(2+)</name>
        <dbReference type="ChEBI" id="CHEBI:29105"/>
        <label>6</label>
    </ligand>
</feature>
<feature type="binding site" evidence="1">
    <location>
        <position position="248"/>
    </location>
    <ligand>
        <name>Zn(2+)</name>
        <dbReference type="ChEBI" id="CHEBI:29105"/>
        <label>6</label>
    </ligand>
</feature>
<feature type="strand" evidence="11">
    <location>
        <begin position="63"/>
        <end position="65"/>
    </location>
</feature>
<feature type="strand" evidence="11">
    <location>
        <begin position="73"/>
        <end position="81"/>
    </location>
</feature>
<feature type="strand" evidence="10">
    <location>
        <begin position="83"/>
        <end position="85"/>
    </location>
</feature>
<feature type="helix" evidence="11">
    <location>
        <begin position="86"/>
        <end position="91"/>
    </location>
</feature>
<feature type="strand" evidence="11">
    <location>
        <begin position="103"/>
        <end position="106"/>
    </location>
</feature>
<organism>
    <name type="scientific">Schizosaccharomyces pombe (strain 972 / ATCC 24843)</name>
    <name type="common">Fission yeast</name>
    <dbReference type="NCBI Taxonomy" id="284812"/>
    <lineage>
        <taxon>Eukaryota</taxon>
        <taxon>Fungi</taxon>
        <taxon>Dikarya</taxon>
        <taxon>Ascomycota</taxon>
        <taxon>Taphrinomycotina</taxon>
        <taxon>Schizosaccharomycetes</taxon>
        <taxon>Schizosaccharomycetales</taxon>
        <taxon>Schizosaccharomycetaceae</taxon>
        <taxon>Schizosaccharomyces</taxon>
    </lineage>
</organism>
<sequence length="397" mass="44659">MLCNRTCPSSDCGILCNHSVPSFPPFHSSVANIHFTKENNLKSNIFEHNNNSPTLRSSSVACNTCLKIIRNDSFHCTKCFDFDVCRDCYAKQAFLHPCPKPHFVLVRSSIPSVASLTCSVNSMSVSPQSNFMYAICDHCEQPIHNVRYKCSVCDDYDICESCLTDNSHSNTHAFVRITKAYPHGLPSFHLFPQFLSAELFESASTVHRSVQCDNCLAHPIVGPRFHCLVCEDYDLCSSCVSHVHHDHHSMLRLTREISASPLHLSKPEKPKVLNFDFKLVEDSILPLELSPGCPFYKIWHIRNTSCQSWPSPLYVKFNGGDKLFPGDNPYSFPITSSVHPGEDVNFTVALKVPEKSNKEIFTAFFNICSDDGSVFHKSLCAFLRVPKSFSRISKSSF</sequence>
<proteinExistence type="evidence at protein level"/>
<dbReference type="EMBL" id="CU329671">
    <property type="protein sequence ID" value="CAB87373.1"/>
    <property type="molecule type" value="Genomic_DNA"/>
</dbReference>
<dbReference type="RefSeq" id="NP_595386.1">
    <property type="nucleotide sequence ID" value="NM_001021293.2"/>
</dbReference>
<dbReference type="PDB" id="7DD9">
    <property type="method" value="EM"/>
    <property type="resolution" value="2.40 A"/>
    <property type="chains" value="A/C/E/G=53-180"/>
</dbReference>
<dbReference type="PDB" id="7DDE">
    <property type="method" value="EM"/>
    <property type="resolution" value="2.26 A"/>
    <property type="chains" value="A/C/E/G/I/K/M/O/Q/S/V/X=53-129"/>
</dbReference>
<dbReference type="PDBsum" id="7DD9"/>
<dbReference type="PDBsum" id="7DDE"/>
<dbReference type="SMR" id="Q9P792"/>
<dbReference type="BioGRID" id="277864">
    <property type="interactions" value="14"/>
</dbReference>
<dbReference type="STRING" id="284812.Q9P792"/>
<dbReference type="iPTMnet" id="Q9P792"/>
<dbReference type="PaxDb" id="4896-SPBP35G2.11c.1"/>
<dbReference type="EnsemblFungi" id="SPBP35G2.11c.1">
    <property type="protein sequence ID" value="SPBP35G2.11c.1:pep"/>
    <property type="gene ID" value="SPBP35G2.11c"/>
</dbReference>
<dbReference type="PomBase" id="SPBP35G2.11c">
    <property type="gene designation" value="nbr1"/>
</dbReference>
<dbReference type="VEuPathDB" id="FungiDB:SPBP35G2.11c"/>
<dbReference type="eggNOG" id="KOG4582">
    <property type="taxonomic scope" value="Eukaryota"/>
</dbReference>
<dbReference type="HOGENOM" id="CLU_765383_0_0_1"/>
<dbReference type="InParanoid" id="Q9P792"/>
<dbReference type="OMA" id="YSICDAC"/>
<dbReference type="PhylomeDB" id="Q9P792"/>
<dbReference type="PRO" id="PR:Q9P792"/>
<dbReference type="Proteomes" id="UP000002485">
    <property type="component" value="Chromosome II"/>
</dbReference>
<dbReference type="GO" id="GO:0000328">
    <property type="term" value="C:fungal-type vacuole lumen"/>
    <property type="evidence" value="ECO:0000314"/>
    <property type="project" value="PomBase"/>
</dbReference>
<dbReference type="GO" id="GO:0005794">
    <property type="term" value="C:Golgi apparatus"/>
    <property type="evidence" value="ECO:0007005"/>
    <property type="project" value="PomBase"/>
</dbReference>
<dbReference type="GO" id="GO:0005771">
    <property type="term" value="C:multivesicular body"/>
    <property type="evidence" value="ECO:0000314"/>
    <property type="project" value="PomBase"/>
</dbReference>
<dbReference type="GO" id="GO:0061957">
    <property type="term" value="C:NVT complex"/>
    <property type="evidence" value="ECO:0000353"/>
    <property type="project" value="PomBase"/>
</dbReference>
<dbReference type="GO" id="GO:0038024">
    <property type="term" value="F:cargo receptor activity"/>
    <property type="evidence" value="ECO:0000269"/>
    <property type="project" value="PomBase"/>
</dbReference>
<dbReference type="GO" id="GO:0008270">
    <property type="term" value="F:zinc ion binding"/>
    <property type="evidence" value="ECO:0007669"/>
    <property type="project" value="UniProtKB-KW"/>
</dbReference>
<dbReference type="GO" id="GO:0120113">
    <property type="term" value="P:cytoplasm to vacuole targeting by the NVT pathway"/>
    <property type="evidence" value="ECO:0000315"/>
    <property type="project" value="PomBase"/>
</dbReference>
<dbReference type="CDD" id="cd14947">
    <property type="entry name" value="NBR1_like"/>
    <property type="match status" value="1"/>
</dbReference>
<dbReference type="CDD" id="cd02340">
    <property type="entry name" value="ZZ_NBR1_like"/>
    <property type="match status" value="1"/>
</dbReference>
<dbReference type="FunFam" id="3.30.60.90:FF:000007">
    <property type="entry name" value="Next to BRCA1 gene 1 protein"/>
    <property type="match status" value="1"/>
</dbReference>
<dbReference type="Gene3D" id="3.30.60.90">
    <property type="match status" value="3"/>
</dbReference>
<dbReference type="Gene3D" id="2.60.40.10">
    <property type="entry name" value="Immunoglobulins"/>
    <property type="match status" value="1"/>
</dbReference>
<dbReference type="InterPro" id="IPR013783">
    <property type="entry name" value="Ig-like_fold"/>
</dbReference>
<dbReference type="InterPro" id="IPR032350">
    <property type="entry name" value="N_BRCA1_central"/>
</dbReference>
<dbReference type="InterPro" id="IPR000433">
    <property type="entry name" value="Znf_ZZ"/>
</dbReference>
<dbReference type="InterPro" id="IPR043145">
    <property type="entry name" value="Znf_ZZ_sf"/>
</dbReference>
<dbReference type="PANTHER" id="PTHR20930">
    <property type="entry name" value="OVARIAN CARCINOMA ANTIGEN CA125-RELATED"/>
    <property type="match status" value="1"/>
</dbReference>
<dbReference type="PANTHER" id="PTHR20930:SF0">
    <property type="entry name" value="PROTEIN ILRUN"/>
    <property type="match status" value="1"/>
</dbReference>
<dbReference type="Pfam" id="PF16158">
    <property type="entry name" value="N_BRCA1_IG"/>
    <property type="match status" value="1"/>
</dbReference>
<dbReference type="Pfam" id="PF00569">
    <property type="entry name" value="ZZ"/>
    <property type="match status" value="3"/>
</dbReference>
<dbReference type="SMART" id="SM00291">
    <property type="entry name" value="ZnF_ZZ"/>
    <property type="match status" value="3"/>
</dbReference>
<dbReference type="SUPFAM" id="SSF57850">
    <property type="entry name" value="RING/U-box"/>
    <property type="match status" value="3"/>
</dbReference>
<dbReference type="PROSITE" id="PS01357">
    <property type="entry name" value="ZF_ZZ_1"/>
    <property type="match status" value="3"/>
</dbReference>
<dbReference type="PROSITE" id="PS50135">
    <property type="entry name" value="ZF_ZZ_2"/>
    <property type="match status" value="3"/>
</dbReference>
<reference evidence="6" key="1">
    <citation type="journal article" date="2002" name="Nature">
        <title>The genome sequence of Schizosaccharomyces pombe.</title>
        <authorList>
            <person name="Wood V."/>
            <person name="Gwilliam R."/>
            <person name="Rajandream M.A."/>
            <person name="Lyne M.H."/>
            <person name="Lyne R."/>
            <person name="Stewart A."/>
            <person name="Sgouros J.G."/>
            <person name="Peat N."/>
            <person name="Hayles J."/>
            <person name="Baker S.G."/>
            <person name="Basham D."/>
            <person name="Bowman S."/>
            <person name="Brooks K."/>
            <person name="Brown D."/>
            <person name="Brown S."/>
            <person name="Chillingworth T."/>
            <person name="Churcher C.M."/>
            <person name="Collins M."/>
            <person name="Connor R."/>
            <person name="Cronin A."/>
            <person name="Davis P."/>
            <person name="Feltwell T."/>
            <person name="Fraser A."/>
            <person name="Gentles S."/>
            <person name="Goble A."/>
            <person name="Hamlin N."/>
            <person name="Harris D.E."/>
            <person name="Hidalgo J."/>
            <person name="Hodgson G."/>
            <person name="Holroyd S."/>
            <person name="Hornsby T."/>
            <person name="Howarth S."/>
            <person name="Huckle E.J."/>
            <person name="Hunt S."/>
            <person name="Jagels K."/>
            <person name="James K.D."/>
            <person name="Jones L."/>
            <person name="Jones M."/>
            <person name="Leather S."/>
            <person name="McDonald S."/>
            <person name="McLean J."/>
            <person name="Mooney P."/>
            <person name="Moule S."/>
            <person name="Mungall K.L."/>
            <person name="Murphy L.D."/>
            <person name="Niblett D."/>
            <person name="Odell C."/>
            <person name="Oliver K."/>
            <person name="O'Neil S."/>
            <person name="Pearson D."/>
            <person name="Quail M.A."/>
            <person name="Rabbinowitsch E."/>
            <person name="Rutherford K.M."/>
            <person name="Rutter S."/>
            <person name="Saunders D."/>
            <person name="Seeger K."/>
            <person name="Sharp S."/>
            <person name="Skelton J."/>
            <person name="Simmonds M.N."/>
            <person name="Squares R."/>
            <person name="Squares S."/>
            <person name="Stevens K."/>
            <person name="Taylor K."/>
            <person name="Taylor R.G."/>
            <person name="Tivey A."/>
            <person name="Walsh S.V."/>
            <person name="Warren T."/>
            <person name="Whitehead S."/>
            <person name="Woodward J.R."/>
            <person name="Volckaert G."/>
            <person name="Aert R."/>
            <person name="Robben J."/>
            <person name="Grymonprez B."/>
            <person name="Weltjens I."/>
            <person name="Vanstreels E."/>
            <person name="Rieger M."/>
            <person name="Schaefer M."/>
            <person name="Mueller-Auer S."/>
            <person name="Gabel C."/>
            <person name="Fuchs M."/>
            <person name="Duesterhoeft A."/>
            <person name="Fritzc C."/>
            <person name="Holzer E."/>
            <person name="Moestl D."/>
            <person name="Hilbert H."/>
            <person name="Borzym K."/>
            <person name="Langer I."/>
            <person name="Beck A."/>
            <person name="Lehrach H."/>
            <person name="Reinhardt R."/>
            <person name="Pohl T.M."/>
            <person name="Eger P."/>
            <person name="Zimmermann W."/>
            <person name="Wedler H."/>
            <person name="Wambutt R."/>
            <person name="Purnelle B."/>
            <person name="Goffeau A."/>
            <person name="Cadieu E."/>
            <person name="Dreano S."/>
            <person name="Gloux S."/>
            <person name="Lelaure V."/>
            <person name="Mottier S."/>
            <person name="Galibert F."/>
            <person name="Aves S.J."/>
            <person name="Xiang Z."/>
            <person name="Hunt C."/>
            <person name="Moore K."/>
            <person name="Hurst S.M."/>
            <person name="Lucas M."/>
            <person name="Rochet M."/>
            <person name="Gaillardin C."/>
            <person name="Tallada V.A."/>
            <person name="Garzon A."/>
            <person name="Thode G."/>
            <person name="Daga R.R."/>
            <person name="Cruzado L."/>
            <person name="Jimenez J."/>
            <person name="Sanchez M."/>
            <person name="del Rey F."/>
            <person name="Benito J."/>
            <person name="Dominguez A."/>
            <person name="Revuelta J.L."/>
            <person name="Moreno S."/>
            <person name="Armstrong J."/>
            <person name="Forsburg S.L."/>
            <person name="Cerutti L."/>
            <person name="Lowe T."/>
            <person name="McCombie W.R."/>
            <person name="Paulsen I."/>
            <person name="Potashkin J."/>
            <person name="Shpakovski G.V."/>
            <person name="Ussery D."/>
            <person name="Barrell B.G."/>
            <person name="Nurse P."/>
        </authorList>
    </citation>
    <scope>NUCLEOTIDE SEQUENCE [LARGE SCALE GENOMIC DNA]</scope>
    <source>
        <strain>972 / ATCC 24843</strain>
    </source>
</reference>
<reference evidence="5" key="2">
    <citation type="journal article" date="2006" name="Nat. Biotechnol.">
        <title>ORFeome cloning and global analysis of protein localization in the fission yeast Schizosaccharomyces pombe.</title>
        <authorList>
            <person name="Matsuyama A."/>
            <person name="Arai R."/>
            <person name="Yashiroda Y."/>
            <person name="Shirai A."/>
            <person name="Kamata A."/>
            <person name="Sekido S."/>
            <person name="Kobayashi Y."/>
            <person name="Hashimoto A."/>
            <person name="Hamamoto M."/>
            <person name="Hiraoka Y."/>
            <person name="Horinouchi S."/>
            <person name="Yoshida M."/>
        </authorList>
    </citation>
    <scope>SUBCELLULAR LOCATION [LARGE SCALE ANALYSIS]</scope>
</reference>
<reference key="3">
    <citation type="journal article" date="2015" name="Mol. Cell">
        <title>ESCRTs cooperate with a selective autophagy receptor to mediate vacuolar targeting of soluble cargos.</title>
        <authorList>
            <person name="Liu X.M."/>
            <person name="Sun L.L."/>
            <person name="Hu W."/>
            <person name="Ding Y.H."/>
            <person name="Dong M.Q."/>
            <person name="Du L.L."/>
        </authorList>
    </citation>
    <scope>FUNCTION</scope>
    <scope>SUBCELLULAR LOCATION</scope>
</reference>
<reference evidence="8 9" key="4">
    <citation type="journal article" date="2021" name="EMBO J.">
        <title>Molecular and structural mechanisms of ZZ domain-mediated cargo selection by Nbr1.</title>
        <authorList>
            <person name="Wang Y.Y."/>
            <person name="Zhang J."/>
            <person name="Liu X.M."/>
            <person name="Li Y."/>
            <person name="Sui J."/>
            <person name="Dong M.Q."/>
            <person name="Ye K."/>
            <person name="Du L.L."/>
        </authorList>
    </citation>
    <scope>STRUCTURE BY ELECTRON MICROSCOPY (2.26 ANGSTROMS) OF 53-129 IN COMPLEX WITH ZN(2+)</scope>
    <scope>FUNCTION</scope>
</reference>
<gene>
    <name type="primary">nbr1</name>
    <name evidence="7" type="ORF">SPBP35G2.11c</name>
</gene>
<evidence type="ECO:0000255" key="1">
    <source>
        <dbReference type="PROSITE-ProRule" id="PRU00228"/>
    </source>
</evidence>
<evidence type="ECO:0000269" key="2">
    <source>
    </source>
</evidence>
<evidence type="ECO:0000269" key="3">
    <source>
    </source>
</evidence>
<evidence type="ECO:0000269" key="4">
    <source>
    </source>
</evidence>
<evidence type="ECO:0000305" key="5"/>
<evidence type="ECO:0000312" key="6">
    <source>
        <dbReference type="EMBL" id="CAB87373.1"/>
    </source>
</evidence>
<evidence type="ECO:0000312" key="7">
    <source>
        <dbReference type="PomBase" id="SPBP35G2.11c"/>
    </source>
</evidence>
<evidence type="ECO:0007744" key="8">
    <source>
        <dbReference type="PDB" id="7DD9"/>
    </source>
</evidence>
<evidence type="ECO:0007744" key="9">
    <source>
        <dbReference type="PDB" id="7DDE"/>
    </source>
</evidence>
<evidence type="ECO:0007829" key="10">
    <source>
        <dbReference type="PDB" id="7DD9"/>
    </source>
</evidence>
<evidence type="ECO:0007829" key="11">
    <source>
        <dbReference type="PDB" id="7DDE"/>
    </source>
</evidence>
<comment type="function">
    <text evidence="3 4">Autophagy receptor that interacts with and facilitates the transport of cytosolic hydrolases Ape2, Ape4 and Lap2, and of mannosidase Ams1 into vacuoles. This Nbr1-mediated vacuolar targeting (NVT) pathway depends on the endosomal sorting complexes required for transport (ESCRTs). NVT components colocalize with ESCRTs at multivesicular bodies (MVBs) and rely on ubiquitination for their transport.</text>
</comment>
<comment type="subcellular location">
    <subcellularLocation>
        <location evidence="2">Golgi apparatus</location>
    </subcellularLocation>
    <subcellularLocation>
        <location evidence="3">Endosome</location>
        <location evidence="3">Multivesicular body</location>
    </subcellularLocation>
    <subcellularLocation>
        <location evidence="3">Vacuole lumen</location>
    </subcellularLocation>
</comment>
<protein>
    <recommendedName>
        <fullName evidence="5">Autophagy receptor Nbr1</fullName>
    </recommendedName>
</protein>
<keyword id="KW-0002">3D-structure</keyword>
<keyword id="KW-0967">Endosome</keyword>
<keyword id="KW-0333">Golgi apparatus</keyword>
<keyword id="KW-0479">Metal-binding</keyword>
<keyword id="KW-1185">Reference proteome</keyword>
<keyword id="KW-0677">Repeat</keyword>
<keyword id="KW-0926">Vacuole</keyword>
<keyword id="KW-0862">Zinc</keyword>
<keyword id="KW-0863">Zinc-finger</keyword>
<accession>Q9P792</accession>
<name>NBR1_SCHPO</name>